<protein>
    <recommendedName>
        <fullName>Ankyrin repeat domain-containing protein 34C</fullName>
    </recommendedName>
</protein>
<keyword id="KW-0040">ANK repeat</keyword>
<keyword id="KW-0597">Phosphoprotein</keyword>
<keyword id="KW-1185">Reference proteome</keyword>
<keyword id="KW-0677">Repeat</keyword>
<name>AN34C_MOUSE</name>
<reference key="1">
    <citation type="journal article" date="2005" name="Science">
        <title>The transcriptional landscape of the mammalian genome.</title>
        <authorList>
            <person name="Carninci P."/>
            <person name="Kasukawa T."/>
            <person name="Katayama S."/>
            <person name="Gough J."/>
            <person name="Frith M.C."/>
            <person name="Maeda N."/>
            <person name="Oyama R."/>
            <person name="Ravasi T."/>
            <person name="Lenhard B."/>
            <person name="Wells C."/>
            <person name="Kodzius R."/>
            <person name="Shimokawa K."/>
            <person name="Bajic V.B."/>
            <person name="Brenner S.E."/>
            <person name="Batalov S."/>
            <person name="Forrest A.R."/>
            <person name="Zavolan M."/>
            <person name="Davis M.J."/>
            <person name="Wilming L.G."/>
            <person name="Aidinis V."/>
            <person name="Allen J.E."/>
            <person name="Ambesi-Impiombato A."/>
            <person name="Apweiler R."/>
            <person name="Aturaliya R.N."/>
            <person name="Bailey T.L."/>
            <person name="Bansal M."/>
            <person name="Baxter L."/>
            <person name="Beisel K.W."/>
            <person name="Bersano T."/>
            <person name="Bono H."/>
            <person name="Chalk A.M."/>
            <person name="Chiu K.P."/>
            <person name="Choudhary V."/>
            <person name="Christoffels A."/>
            <person name="Clutterbuck D.R."/>
            <person name="Crowe M.L."/>
            <person name="Dalla E."/>
            <person name="Dalrymple B.P."/>
            <person name="de Bono B."/>
            <person name="Della Gatta G."/>
            <person name="di Bernardo D."/>
            <person name="Down T."/>
            <person name="Engstrom P."/>
            <person name="Fagiolini M."/>
            <person name="Faulkner G."/>
            <person name="Fletcher C.F."/>
            <person name="Fukushima T."/>
            <person name="Furuno M."/>
            <person name="Futaki S."/>
            <person name="Gariboldi M."/>
            <person name="Georgii-Hemming P."/>
            <person name="Gingeras T.R."/>
            <person name="Gojobori T."/>
            <person name="Green R.E."/>
            <person name="Gustincich S."/>
            <person name="Harbers M."/>
            <person name="Hayashi Y."/>
            <person name="Hensch T.K."/>
            <person name="Hirokawa N."/>
            <person name="Hill D."/>
            <person name="Huminiecki L."/>
            <person name="Iacono M."/>
            <person name="Ikeo K."/>
            <person name="Iwama A."/>
            <person name="Ishikawa T."/>
            <person name="Jakt M."/>
            <person name="Kanapin A."/>
            <person name="Katoh M."/>
            <person name="Kawasawa Y."/>
            <person name="Kelso J."/>
            <person name="Kitamura H."/>
            <person name="Kitano H."/>
            <person name="Kollias G."/>
            <person name="Krishnan S.P."/>
            <person name="Kruger A."/>
            <person name="Kummerfeld S.K."/>
            <person name="Kurochkin I.V."/>
            <person name="Lareau L.F."/>
            <person name="Lazarevic D."/>
            <person name="Lipovich L."/>
            <person name="Liu J."/>
            <person name="Liuni S."/>
            <person name="McWilliam S."/>
            <person name="Madan Babu M."/>
            <person name="Madera M."/>
            <person name="Marchionni L."/>
            <person name="Matsuda H."/>
            <person name="Matsuzawa S."/>
            <person name="Miki H."/>
            <person name="Mignone F."/>
            <person name="Miyake S."/>
            <person name="Morris K."/>
            <person name="Mottagui-Tabar S."/>
            <person name="Mulder N."/>
            <person name="Nakano N."/>
            <person name="Nakauchi H."/>
            <person name="Ng P."/>
            <person name="Nilsson R."/>
            <person name="Nishiguchi S."/>
            <person name="Nishikawa S."/>
            <person name="Nori F."/>
            <person name="Ohara O."/>
            <person name="Okazaki Y."/>
            <person name="Orlando V."/>
            <person name="Pang K.C."/>
            <person name="Pavan W.J."/>
            <person name="Pavesi G."/>
            <person name="Pesole G."/>
            <person name="Petrovsky N."/>
            <person name="Piazza S."/>
            <person name="Reed J."/>
            <person name="Reid J.F."/>
            <person name="Ring B.Z."/>
            <person name="Ringwald M."/>
            <person name="Rost B."/>
            <person name="Ruan Y."/>
            <person name="Salzberg S.L."/>
            <person name="Sandelin A."/>
            <person name="Schneider C."/>
            <person name="Schoenbach C."/>
            <person name="Sekiguchi K."/>
            <person name="Semple C.A."/>
            <person name="Seno S."/>
            <person name="Sessa L."/>
            <person name="Sheng Y."/>
            <person name="Shibata Y."/>
            <person name="Shimada H."/>
            <person name="Shimada K."/>
            <person name="Silva D."/>
            <person name="Sinclair B."/>
            <person name="Sperling S."/>
            <person name="Stupka E."/>
            <person name="Sugiura K."/>
            <person name="Sultana R."/>
            <person name="Takenaka Y."/>
            <person name="Taki K."/>
            <person name="Tammoja K."/>
            <person name="Tan S.L."/>
            <person name="Tang S."/>
            <person name="Taylor M.S."/>
            <person name="Tegner J."/>
            <person name="Teichmann S.A."/>
            <person name="Ueda H.R."/>
            <person name="van Nimwegen E."/>
            <person name="Verardo R."/>
            <person name="Wei C.L."/>
            <person name="Yagi K."/>
            <person name="Yamanishi H."/>
            <person name="Zabarovsky E."/>
            <person name="Zhu S."/>
            <person name="Zimmer A."/>
            <person name="Hide W."/>
            <person name="Bult C."/>
            <person name="Grimmond S.M."/>
            <person name="Teasdale R.D."/>
            <person name="Liu E.T."/>
            <person name="Brusic V."/>
            <person name="Quackenbush J."/>
            <person name="Wahlestedt C."/>
            <person name="Mattick J.S."/>
            <person name="Hume D.A."/>
            <person name="Kai C."/>
            <person name="Sasaki D."/>
            <person name="Tomaru Y."/>
            <person name="Fukuda S."/>
            <person name="Kanamori-Katayama M."/>
            <person name="Suzuki M."/>
            <person name="Aoki J."/>
            <person name="Arakawa T."/>
            <person name="Iida J."/>
            <person name="Imamura K."/>
            <person name="Itoh M."/>
            <person name="Kato T."/>
            <person name="Kawaji H."/>
            <person name="Kawagashira N."/>
            <person name="Kawashima T."/>
            <person name="Kojima M."/>
            <person name="Kondo S."/>
            <person name="Konno H."/>
            <person name="Nakano K."/>
            <person name="Ninomiya N."/>
            <person name="Nishio T."/>
            <person name="Okada M."/>
            <person name="Plessy C."/>
            <person name="Shibata K."/>
            <person name="Shiraki T."/>
            <person name="Suzuki S."/>
            <person name="Tagami M."/>
            <person name="Waki K."/>
            <person name="Watahiki A."/>
            <person name="Okamura-Oho Y."/>
            <person name="Suzuki H."/>
            <person name="Kawai J."/>
            <person name="Hayashizaki Y."/>
        </authorList>
    </citation>
    <scope>NUCLEOTIDE SEQUENCE [LARGE SCALE MRNA]</scope>
    <source>
        <strain>C57BL/6J</strain>
        <tissue>Corpora quadrigemina</tissue>
    </source>
</reference>
<reference key="2">
    <citation type="journal article" date="2010" name="Cell">
        <title>A tissue-specific atlas of mouse protein phosphorylation and expression.</title>
        <authorList>
            <person name="Huttlin E.L."/>
            <person name="Jedrychowski M.P."/>
            <person name="Elias J.E."/>
            <person name="Goswami T."/>
            <person name="Rad R."/>
            <person name="Beausoleil S.A."/>
            <person name="Villen J."/>
            <person name="Haas W."/>
            <person name="Sowa M.E."/>
            <person name="Gygi S.P."/>
        </authorList>
    </citation>
    <scope>PHOSPHORYLATION [LARGE SCALE ANALYSIS] AT SER-301 AND SER-446</scope>
    <scope>IDENTIFICATION BY MASS SPECTROMETRY [LARGE SCALE ANALYSIS]</scope>
    <source>
        <tissue>Brain</tissue>
    </source>
</reference>
<organism>
    <name type="scientific">Mus musculus</name>
    <name type="common">Mouse</name>
    <dbReference type="NCBI Taxonomy" id="10090"/>
    <lineage>
        <taxon>Eukaryota</taxon>
        <taxon>Metazoa</taxon>
        <taxon>Chordata</taxon>
        <taxon>Craniata</taxon>
        <taxon>Vertebrata</taxon>
        <taxon>Euteleostomi</taxon>
        <taxon>Mammalia</taxon>
        <taxon>Eutheria</taxon>
        <taxon>Euarchontoglires</taxon>
        <taxon>Glires</taxon>
        <taxon>Rodentia</taxon>
        <taxon>Myomorpha</taxon>
        <taxon>Muroidea</taxon>
        <taxon>Muridae</taxon>
        <taxon>Murinae</taxon>
        <taxon>Mus</taxon>
        <taxon>Mus</taxon>
    </lineage>
</organism>
<proteinExistence type="evidence at protein level"/>
<evidence type="ECO:0000256" key="1">
    <source>
        <dbReference type="SAM" id="MobiDB-lite"/>
    </source>
</evidence>
<evidence type="ECO:0000305" key="2"/>
<evidence type="ECO:0007744" key="3">
    <source>
    </source>
</evidence>
<comment type="similarity">
    <text evidence="2">Belongs to the ANKRD34 family.</text>
</comment>
<sequence>MMDDDTELRTDGNSLLKAVWLGRLRLTRLLLEGGAYINESNDKGETALMVACITKHVDQQSISKSKMVKYLLDNRADPNIQDKSGKTALIHACIRRAGGEVVSLLLENGADPSLEDRTGASALVYAINADDKDALKHLLDACKAKGKEVIIITTDKSSSGTKTTKQYLNVPPSPKVEDRQSPPLCTTPSDVELKTSGLASPPSEKDDDFFILQTGHQSGCSTSKVLNEPGSPTRKVSSLKRARLPQLKRLQSEPWGLIAPSVLAAATRQDETHGTSTDNEVIRSINDVTFPKRGPLSRTNSIDSKDPTLFPTVQEQVLKVSASTPASWKAAYEKGQAPHPRLARRGTLPLDQEKSGMCPPGPSTLKDPASLKLLENDLYDLDIQPVGDPPNSMSLESGKGPLDRKKLNSSHLSLFHGSRESLEVVPSTSPTSVRRRPPHLLERRGSGTLLLDRIAHTRPGFLPPLNVNLNPPIPDIRASSKPASPLASGLKSMAPVAPNSPKRVDLRSKKKLLRRHSMQIEQMKQLSDFEEIMA</sequence>
<gene>
    <name type="primary">Ankrd34c</name>
</gene>
<accession>Q8BLB8</accession>
<dbReference type="EMBL" id="AK045652">
    <property type="protein sequence ID" value="BAC32445.1"/>
    <property type="molecule type" value="mRNA"/>
</dbReference>
<dbReference type="CCDS" id="CCDS23397.1"/>
<dbReference type="RefSeq" id="NP_997143.1">
    <property type="nucleotide sequence ID" value="NM_207260.2"/>
</dbReference>
<dbReference type="RefSeq" id="XP_006511305.1">
    <property type="nucleotide sequence ID" value="XM_006511242.5"/>
</dbReference>
<dbReference type="RefSeq" id="XP_006511306.1">
    <property type="nucleotide sequence ID" value="XM_006511243.5"/>
</dbReference>
<dbReference type="SMR" id="Q8BLB8"/>
<dbReference type="FunCoup" id="Q8BLB8">
    <property type="interactions" value="9"/>
</dbReference>
<dbReference type="STRING" id="10090.ENSMUSP00000056787"/>
<dbReference type="GlyGen" id="Q8BLB8">
    <property type="glycosylation" value="1 site"/>
</dbReference>
<dbReference type="iPTMnet" id="Q8BLB8"/>
<dbReference type="PhosphoSitePlus" id="Q8BLB8"/>
<dbReference type="PaxDb" id="10090-ENSMUSP00000056787"/>
<dbReference type="ProteomicsDB" id="281822"/>
<dbReference type="Antibodypedia" id="68063">
    <property type="antibodies" value="62 antibodies from 10 providers"/>
</dbReference>
<dbReference type="DNASU" id="330998"/>
<dbReference type="Ensembl" id="ENSMUST00000060700.4">
    <property type="protein sequence ID" value="ENSMUSP00000056787.2"/>
    <property type="gene ID" value="ENSMUSG00000047606.5"/>
</dbReference>
<dbReference type="Ensembl" id="ENSMUST00000185470.3">
    <property type="protein sequence ID" value="ENSMUSP00000140919.2"/>
    <property type="gene ID" value="ENSMUSG00000047606.5"/>
</dbReference>
<dbReference type="GeneID" id="330998"/>
<dbReference type="KEGG" id="mmu:330998"/>
<dbReference type="UCSC" id="uc009qzp.1">
    <property type="organism name" value="mouse"/>
</dbReference>
<dbReference type="AGR" id="MGI:2685617"/>
<dbReference type="CTD" id="390616"/>
<dbReference type="MGI" id="MGI:2685617">
    <property type="gene designation" value="Ankrd34c"/>
</dbReference>
<dbReference type="VEuPathDB" id="HostDB:ENSMUSG00000047606"/>
<dbReference type="eggNOG" id="ENOG502QW3G">
    <property type="taxonomic scope" value="Eukaryota"/>
</dbReference>
<dbReference type="GeneTree" id="ENSGT00880000138051"/>
<dbReference type="HOGENOM" id="CLU_042805_0_0_1"/>
<dbReference type="InParanoid" id="Q8BLB8"/>
<dbReference type="OMA" id="EQQNTVF"/>
<dbReference type="OrthoDB" id="341259at2759"/>
<dbReference type="PhylomeDB" id="Q8BLB8"/>
<dbReference type="TreeFam" id="TF331155"/>
<dbReference type="BioGRID-ORCS" id="330998">
    <property type="hits" value="2 hits in 76 CRISPR screens"/>
</dbReference>
<dbReference type="PRO" id="PR:Q8BLB8"/>
<dbReference type="Proteomes" id="UP000000589">
    <property type="component" value="Chromosome 9"/>
</dbReference>
<dbReference type="RNAct" id="Q8BLB8">
    <property type="molecule type" value="protein"/>
</dbReference>
<dbReference type="Bgee" id="ENSMUSG00000047606">
    <property type="expression patterns" value="Expressed in epithelium of lens and 42 other cell types or tissues"/>
</dbReference>
<dbReference type="ExpressionAtlas" id="Q8BLB8">
    <property type="expression patterns" value="baseline and differential"/>
</dbReference>
<dbReference type="Gene3D" id="1.25.40.20">
    <property type="entry name" value="Ankyrin repeat-containing domain"/>
    <property type="match status" value="1"/>
</dbReference>
<dbReference type="InterPro" id="IPR042637">
    <property type="entry name" value="AN34A/B/C"/>
</dbReference>
<dbReference type="InterPro" id="IPR002110">
    <property type="entry name" value="Ankyrin_rpt"/>
</dbReference>
<dbReference type="InterPro" id="IPR036770">
    <property type="entry name" value="Ankyrin_rpt-contain_sf"/>
</dbReference>
<dbReference type="PANTHER" id="PTHR24156">
    <property type="entry name" value="ANK_REP_REGION DOMAIN-CONTAINING PROTEIN"/>
    <property type="match status" value="1"/>
</dbReference>
<dbReference type="PANTHER" id="PTHR24156:SF6">
    <property type="entry name" value="ANKYRIN REPEAT DOMAIN 34C"/>
    <property type="match status" value="1"/>
</dbReference>
<dbReference type="Pfam" id="PF12796">
    <property type="entry name" value="Ank_2"/>
    <property type="match status" value="1"/>
</dbReference>
<dbReference type="SMART" id="SM00248">
    <property type="entry name" value="ANK"/>
    <property type="match status" value="4"/>
</dbReference>
<dbReference type="SUPFAM" id="SSF48403">
    <property type="entry name" value="Ankyrin repeat"/>
    <property type="match status" value="1"/>
</dbReference>
<dbReference type="PROSITE" id="PS50297">
    <property type="entry name" value="ANK_REP_REGION"/>
    <property type="match status" value="1"/>
</dbReference>
<dbReference type="PROSITE" id="PS50088">
    <property type="entry name" value="ANK_REPEAT"/>
    <property type="match status" value="2"/>
</dbReference>
<feature type="chain" id="PRO_0000319105" description="Ankyrin repeat domain-containing protein 34C">
    <location>
        <begin position="1"/>
        <end position="534"/>
    </location>
</feature>
<feature type="repeat" description="ANK 1">
    <location>
        <begin position="10"/>
        <end position="39"/>
    </location>
</feature>
<feature type="repeat" description="ANK 2">
    <location>
        <begin position="43"/>
        <end position="80"/>
    </location>
</feature>
<feature type="repeat" description="ANK 3">
    <location>
        <begin position="84"/>
        <end position="114"/>
    </location>
</feature>
<feature type="repeat" description="ANK 4">
    <location>
        <begin position="118"/>
        <end position="147"/>
    </location>
</feature>
<feature type="region of interest" description="Disordered" evidence="1">
    <location>
        <begin position="159"/>
        <end position="205"/>
    </location>
</feature>
<feature type="region of interest" description="Disordered" evidence="1">
    <location>
        <begin position="332"/>
        <end position="368"/>
    </location>
</feature>
<feature type="region of interest" description="Disordered" evidence="1">
    <location>
        <begin position="384"/>
        <end position="403"/>
    </location>
</feature>
<feature type="region of interest" description="Disordered" evidence="1">
    <location>
        <begin position="480"/>
        <end position="503"/>
    </location>
</feature>
<feature type="modified residue" description="Phosphoserine" evidence="3">
    <location>
        <position position="301"/>
    </location>
</feature>
<feature type="modified residue" description="Phosphoserine" evidence="3">
    <location>
        <position position="446"/>
    </location>
</feature>